<evidence type="ECO:0000250" key="1">
    <source>
        <dbReference type="UniProtKB" id="Q9Y289"/>
    </source>
</evidence>
<evidence type="ECO:0000255" key="2"/>
<evidence type="ECO:0000269" key="3">
    <source>
    </source>
</evidence>
<evidence type="ECO:0000305" key="4"/>
<evidence type="ECO:0000312" key="5">
    <source>
        <dbReference type="EMBL" id="AAF47962.2"/>
    </source>
</evidence>
<name>SC5A6_DROME</name>
<dbReference type="EMBL" id="AE014298">
    <property type="protein sequence ID" value="AAF47962.2"/>
    <property type="molecule type" value="Genomic_DNA"/>
</dbReference>
<dbReference type="EMBL" id="BT016069">
    <property type="protein sequence ID" value="AAV36954.1"/>
    <property type="molecule type" value="mRNA"/>
</dbReference>
<dbReference type="RefSeq" id="NP_727460.1">
    <property type="nucleotide sequence ID" value="NM_167256.2"/>
</dbReference>
<dbReference type="SMR" id="P83740"/>
<dbReference type="FunCoup" id="P83740">
    <property type="interactions" value="2"/>
</dbReference>
<dbReference type="IntAct" id="P83740">
    <property type="interactions" value="1"/>
</dbReference>
<dbReference type="STRING" id="7227.FBpp0073268"/>
<dbReference type="GlyGen" id="P83740">
    <property type="glycosylation" value="2 sites"/>
</dbReference>
<dbReference type="SwissPalm" id="P83740"/>
<dbReference type="PaxDb" id="7227-FBpp0073268"/>
<dbReference type="DNASU" id="326229"/>
<dbReference type="EnsemblMetazoa" id="FBtr0073412">
    <property type="protein sequence ID" value="FBpp0073268"/>
    <property type="gene ID" value="FBgn0052669"/>
</dbReference>
<dbReference type="GeneID" id="326229"/>
<dbReference type="KEGG" id="dme:Dmel_CG32669"/>
<dbReference type="UCSC" id="CG32669-RA">
    <property type="organism name" value="d. melanogaster"/>
</dbReference>
<dbReference type="AGR" id="FB:FBgn0052669"/>
<dbReference type="FlyBase" id="FBgn0052669">
    <property type="gene designation" value="CG32669"/>
</dbReference>
<dbReference type="VEuPathDB" id="VectorBase:FBgn0052669"/>
<dbReference type="eggNOG" id="KOG2349">
    <property type="taxonomic scope" value="Eukaryota"/>
</dbReference>
<dbReference type="GeneTree" id="ENSGT00940000155731"/>
<dbReference type="HOGENOM" id="CLU_018808_11_1_1"/>
<dbReference type="InParanoid" id="P83740"/>
<dbReference type="OMA" id="MAQFFNS"/>
<dbReference type="OrthoDB" id="6132759at2759"/>
<dbReference type="PhylomeDB" id="P83740"/>
<dbReference type="Reactome" id="R-DME-209968">
    <property type="pathway name" value="Thyroxine biosynthesis"/>
</dbReference>
<dbReference type="Reactome" id="R-DME-427601">
    <property type="pathway name" value="Multifunctional anion exchangers"/>
</dbReference>
<dbReference type="Reactome" id="R-DME-428643">
    <property type="pathway name" value="Organic anion transporters"/>
</dbReference>
<dbReference type="BioGRID-ORCS" id="326229">
    <property type="hits" value="0 hits in 3 CRISPR screens"/>
</dbReference>
<dbReference type="GenomeRNAi" id="326229"/>
<dbReference type="PRO" id="PR:P83740"/>
<dbReference type="Proteomes" id="UP000000803">
    <property type="component" value="Chromosome X"/>
</dbReference>
<dbReference type="Bgee" id="FBgn0052669">
    <property type="expression patterns" value="Expressed in reticular neuropil associated glial cell (Drosophila) in brain and 57 other cell types or tissues"/>
</dbReference>
<dbReference type="ExpressionAtlas" id="P83740">
    <property type="expression patterns" value="baseline and differential"/>
</dbReference>
<dbReference type="GO" id="GO:0005886">
    <property type="term" value="C:plasma membrane"/>
    <property type="evidence" value="ECO:0007669"/>
    <property type="project" value="UniProtKB-SubCell"/>
</dbReference>
<dbReference type="GO" id="GO:0015293">
    <property type="term" value="F:symporter activity"/>
    <property type="evidence" value="ECO:0000318"/>
    <property type="project" value="GO_Central"/>
</dbReference>
<dbReference type="GO" id="GO:0006814">
    <property type="term" value="P:sodium ion transport"/>
    <property type="evidence" value="ECO:0000318"/>
    <property type="project" value="GO_Central"/>
</dbReference>
<dbReference type="CDD" id="cd11492">
    <property type="entry name" value="SLC5sbd_NIS-SMVT"/>
    <property type="match status" value="1"/>
</dbReference>
<dbReference type="Gene3D" id="1.20.1730.10">
    <property type="entry name" value="Sodium/glucose cotransporter"/>
    <property type="match status" value="1"/>
</dbReference>
<dbReference type="InterPro" id="IPR038377">
    <property type="entry name" value="Na/Glc_symporter_sf"/>
</dbReference>
<dbReference type="InterPro" id="IPR001734">
    <property type="entry name" value="Na/solute_symporter"/>
</dbReference>
<dbReference type="InterPro" id="IPR051163">
    <property type="entry name" value="Sodium:Solute_Symporter_SSF"/>
</dbReference>
<dbReference type="NCBIfam" id="TIGR00813">
    <property type="entry name" value="sss"/>
    <property type="match status" value="1"/>
</dbReference>
<dbReference type="PANTHER" id="PTHR42985:SF40">
    <property type="entry name" value="LD47995P-RELATED"/>
    <property type="match status" value="1"/>
</dbReference>
<dbReference type="PANTHER" id="PTHR42985">
    <property type="entry name" value="SODIUM-COUPLED MONOCARBOXYLATE TRANSPORTER"/>
    <property type="match status" value="1"/>
</dbReference>
<dbReference type="Pfam" id="PF00474">
    <property type="entry name" value="SSF"/>
    <property type="match status" value="1"/>
</dbReference>
<dbReference type="PROSITE" id="PS50283">
    <property type="entry name" value="NA_SOLUT_SYMP_3"/>
    <property type="match status" value="1"/>
</dbReference>
<sequence>MATLGAWDYTILAVVLIISVAIGIYYRFVGGKQSTTTEYLLADRSMNVAPVAFSLMASFMSAVTILGVSMENYQYGTMFVVINLSYVLSTPVAAYLIIPVFYRLKTASVYEYLELRFGYATRLAASLSFSLQMVLYMGIVVYAPALALEAVTGLSQVFSIVIVGVVCTFYATLGGMKAVLITDIYQSLLMFAAVFSVIICAWVKAGSLEVIWRVAQENGRINLTNFSVDPTERHTWFTQILGGCATYLAIYGVNQTQVQRLMAVKSLSAARAALWWCLPILCLLSLSTCFSGLCIYWYYRDCDPLLEGRVNSRDQVMPLFVVDTMGEYTGLAGLFVSGIFCASLSTISSIISSLAAVTLEDYLKPLVSCCAKRTLTDRQTLWYSKLLSLFFGALCIGMAFMAGSIGGLLQAALSIFGIIGGPLLGLFTLGMYVTKANEKGAIGGLLISLAFCFWIGFGQPKPPLVSLDMSTAGCPVDRSFARDIFLKTVIAVAEEEHYFYLYRISYMWYAALGFLITFFGGWLLSWLFALLKWDNNRRIYQDADCTLIKHDLFVPPIAKRLQRRQMPLLVVTGTSSEIGGITTESATAPPRLDEIEWEKHKAVA</sequence>
<protein>
    <recommendedName>
        <fullName>Putative sodium-dependent multivitamin transporter</fullName>
        <shortName>Na(+)-dependent multivitamin transporter</shortName>
    </recommendedName>
</protein>
<feature type="chain" id="PRO_0000105390" description="Putative sodium-dependent multivitamin transporter">
    <location>
        <begin position="1"/>
        <end position="604"/>
    </location>
</feature>
<feature type="transmembrane region" description="Helical" evidence="2">
    <location>
        <begin position="4"/>
        <end position="24"/>
    </location>
</feature>
<feature type="transmembrane region" description="Helical" evidence="2">
    <location>
        <begin position="48"/>
        <end position="68"/>
    </location>
</feature>
<feature type="transmembrane region" description="Helical" evidence="2">
    <location>
        <begin position="78"/>
        <end position="98"/>
    </location>
</feature>
<feature type="transmembrane region" description="Helical" evidence="2">
    <location>
        <begin position="134"/>
        <end position="154"/>
    </location>
</feature>
<feature type="transmembrane region" description="Helical" evidence="2">
    <location>
        <begin position="160"/>
        <end position="180"/>
    </location>
</feature>
<feature type="transmembrane region" description="Helical" evidence="2">
    <location>
        <begin position="188"/>
        <end position="208"/>
    </location>
</feature>
<feature type="transmembrane region" description="Helical" evidence="2">
    <location>
        <begin position="234"/>
        <end position="254"/>
    </location>
</feature>
<feature type="transmembrane region" description="Helical" evidence="2">
    <location>
        <begin position="273"/>
        <end position="293"/>
    </location>
</feature>
<feature type="transmembrane region" description="Helical" evidence="2">
    <location>
        <begin position="331"/>
        <end position="351"/>
    </location>
</feature>
<feature type="transmembrane region" description="Helical" evidence="2">
    <location>
        <begin position="389"/>
        <end position="409"/>
    </location>
</feature>
<feature type="transmembrane region" description="Helical" evidence="2">
    <location>
        <begin position="413"/>
        <end position="433"/>
    </location>
</feature>
<feature type="transmembrane region" description="Helical" evidence="2">
    <location>
        <begin position="440"/>
        <end position="460"/>
    </location>
</feature>
<feature type="transmembrane region" description="Helical" evidence="2">
    <location>
        <begin position="511"/>
        <end position="531"/>
    </location>
</feature>
<feature type="glycosylation site" description="N-linked (GlcNAc...) asparagine" evidence="2">
    <location>
        <position position="222"/>
    </location>
</feature>
<feature type="glycosylation site" description="N-linked (GlcNAc...) asparagine" evidence="2">
    <location>
        <position position="225"/>
    </location>
</feature>
<comment type="subcellular location">
    <subcellularLocation>
        <location evidence="1">Cell membrane</location>
        <topology evidence="4">Multi-pass membrane protein</topology>
    </subcellularLocation>
</comment>
<comment type="similarity">
    <text evidence="4">Belongs to the sodium:solute symporter (SSF) (TC 2.A.21) family.</text>
</comment>
<gene>
    <name type="ORF">CG32669</name>
</gene>
<keyword id="KW-1003">Cell membrane</keyword>
<keyword id="KW-0325">Glycoprotein</keyword>
<keyword id="KW-0406">Ion transport</keyword>
<keyword id="KW-0472">Membrane</keyword>
<keyword id="KW-1185">Reference proteome</keyword>
<keyword id="KW-0915">Sodium</keyword>
<keyword id="KW-0739">Sodium transport</keyword>
<keyword id="KW-0769">Symport</keyword>
<keyword id="KW-0812">Transmembrane</keyword>
<keyword id="KW-1133">Transmembrane helix</keyword>
<keyword id="KW-0813">Transport</keyword>
<organism evidence="5">
    <name type="scientific">Drosophila melanogaster</name>
    <name type="common">Fruit fly</name>
    <dbReference type="NCBI Taxonomy" id="7227"/>
    <lineage>
        <taxon>Eukaryota</taxon>
        <taxon>Metazoa</taxon>
        <taxon>Ecdysozoa</taxon>
        <taxon>Arthropoda</taxon>
        <taxon>Hexapoda</taxon>
        <taxon>Insecta</taxon>
        <taxon>Pterygota</taxon>
        <taxon>Neoptera</taxon>
        <taxon>Endopterygota</taxon>
        <taxon>Diptera</taxon>
        <taxon>Brachycera</taxon>
        <taxon>Muscomorpha</taxon>
        <taxon>Ephydroidea</taxon>
        <taxon>Drosophilidae</taxon>
        <taxon>Drosophila</taxon>
        <taxon>Sophophora</taxon>
    </lineage>
</organism>
<reference evidence="4" key="1">
    <citation type="journal article" date="2000" name="Science">
        <title>The genome sequence of Drosophila melanogaster.</title>
        <authorList>
            <person name="Adams M.D."/>
            <person name="Celniker S.E."/>
            <person name="Holt R.A."/>
            <person name="Evans C.A."/>
            <person name="Gocayne J.D."/>
            <person name="Amanatides P.G."/>
            <person name="Scherer S.E."/>
            <person name="Li P.W."/>
            <person name="Hoskins R.A."/>
            <person name="Galle R.F."/>
            <person name="George R.A."/>
            <person name="Lewis S.E."/>
            <person name="Richards S."/>
            <person name="Ashburner M."/>
            <person name="Henderson S.N."/>
            <person name="Sutton G.G."/>
            <person name="Wortman J.R."/>
            <person name="Yandell M.D."/>
            <person name="Zhang Q."/>
            <person name="Chen L.X."/>
            <person name="Brandon R.C."/>
            <person name="Rogers Y.-H.C."/>
            <person name="Blazej R.G."/>
            <person name="Champe M."/>
            <person name="Pfeiffer B.D."/>
            <person name="Wan K.H."/>
            <person name="Doyle C."/>
            <person name="Baxter E.G."/>
            <person name="Helt G."/>
            <person name="Nelson C.R."/>
            <person name="Miklos G.L.G."/>
            <person name="Abril J.F."/>
            <person name="Agbayani A."/>
            <person name="An H.-J."/>
            <person name="Andrews-Pfannkoch C."/>
            <person name="Baldwin D."/>
            <person name="Ballew R.M."/>
            <person name="Basu A."/>
            <person name="Baxendale J."/>
            <person name="Bayraktaroglu L."/>
            <person name="Beasley E.M."/>
            <person name="Beeson K.Y."/>
            <person name="Benos P.V."/>
            <person name="Berman B.P."/>
            <person name="Bhandari D."/>
            <person name="Bolshakov S."/>
            <person name="Borkova D."/>
            <person name="Botchan M.R."/>
            <person name="Bouck J."/>
            <person name="Brokstein P."/>
            <person name="Brottier P."/>
            <person name="Burtis K.C."/>
            <person name="Busam D.A."/>
            <person name="Butler H."/>
            <person name="Cadieu E."/>
            <person name="Center A."/>
            <person name="Chandra I."/>
            <person name="Cherry J.M."/>
            <person name="Cawley S."/>
            <person name="Dahlke C."/>
            <person name="Davenport L.B."/>
            <person name="Davies P."/>
            <person name="de Pablos B."/>
            <person name="Delcher A."/>
            <person name="Deng Z."/>
            <person name="Mays A.D."/>
            <person name="Dew I."/>
            <person name="Dietz S.M."/>
            <person name="Dodson K."/>
            <person name="Doup L.E."/>
            <person name="Downes M."/>
            <person name="Dugan-Rocha S."/>
            <person name="Dunkov B.C."/>
            <person name="Dunn P."/>
            <person name="Durbin K.J."/>
            <person name="Evangelista C.C."/>
            <person name="Ferraz C."/>
            <person name="Ferriera S."/>
            <person name="Fleischmann W."/>
            <person name="Fosler C."/>
            <person name="Gabrielian A.E."/>
            <person name="Garg N.S."/>
            <person name="Gelbart W.M."/>
            <person name="Glasser K."/>
            <person name="Glodek A."/>
            <person name="Gong F."/>
            <person name="Gorrell J.H."/>
            <person name="Gu Z."/>
            <person name="Guan P."/>
            <person name="Harris M."/>
            <person name="Harris N.L."/>
            <person name="Harvey D.A."/>
            <person name="Heiman T.J."/>
            <person name="Hernandez J.R."/>
            <person name="Houck J."/>
            <person name="Hostin D."/>
            <person name="Houston K.A."/>
            <person name="Howland T.J."/>
            <person name="Wei M.-H."/>
            <person name="Ibegwam C."/>
            <person name="Jalali M."/>
            <person name="Kalush F."/>
            <person name="Karpen G.H."/>
            <person name="Ke Z."/>
            <person name="Kennison J.A."/>
            <person name="Ketchum K.A."/>
            <person name="Kimmel B.E."/>
            <person name="Kodira C.D."/>
            <person name="Kraft C.L."/>
            <person name="Kravitz S."/>
            <person name="Kulp D."/>
            <person name="Lai Z."/>
            <person name="Lasko P."/>
            <person name="Lei Y."/>
            <person name="Levitsky A.A."/>
            <person name="Li J.H."/>
            <person name="Li Z."/>
            <person name="Liang Y."/>
            <person name="Lin X."/>
            <person name="Liu X."/>
            <person name="Mattei B."/>
            <person name="McIntosh T.C."/>
            <person name="McLeod M.P."/>
            <person name="McPherson D."/>
            <person name="Merkulov G."/>
            <person name="Milshina N.V."/>
            <person name="Mobarry C."/>
            <person name="Morris J."/>
            <person name="Moshrefi A."/>
            <person name="Mount S.M."/>
            <person name="Moy M."/>
            <person name="Murphy B."/>
            <person name="Murphy L."/>
            <person name="Muzny D.M."/>
            <person name="Nelson D.L."/>
            <person name="Nelson D.R."/>
            <person name="Nelson K.A."/>
            <person name="Nixon K."/>
            <person name="Nusskern D.R."/>
            <person name="Pacleb J.M."/>
            <person name="Palazzolo M."/>
            <person name="Pittman G.S."/>
            <person name="Pan S."/>
            <person name="Pollard J."/>
            <person name="Puri V."/>
            <person name="Reese M.G."/>
            <person name="Reinert K."/>
            <person name="Remington K."/>
            <person name="Saunders R.D.C."/>
            <person name="Scheeler F."/>
            <person name="Shen H."/>
            <person name="Shue B.C."/>
            <person name="Siden-Kiamos I."/>
            <person name="Simpson M."/>
            <person name="Skupski M.P."/>
            <person name="Smith T.J."/>
            <person name="Spier E."/>
            <person name="Spradling A.C."/>
            <person name="Stapleton M."/>
            <person name="Strong R."/>
            <person name="Sun E."/>
            <person name="Svirskas R."/>
            <person name="Tector C."/>
            <person name="Turner R."/>
            <person name="Venter E."/>
            <person name="Wang A.H."/>
            <person name="Wang X."/>
            <person name="Wang Z.-Y."/>
            <person name="Wassarman D.A."/>
            <person name="Weinstock G.M."/>
            <person name="Weissenbach J."/>
            <person name="Williams S.M."/>
            <person name="Woodage T."/>
            <person name="Worley K.C."/>
            <person name="Wu D."/>
            <person name="Yang S."/>
            <person name="Yao Q.A."/>
            <person name="Ye J."/>
            <person name="Yeh R.-F."/>
            <person name="Zaveri J.S."/>
            <person name="Zhan M."/>
            <person name="Zhang G."/>
            <person name="Zhao Q."/>
            <person name="Zheng L."/>
            <person name="Zheng X.H."/>
            <person name="Zhong F.N."/>
            <person name="Zhong W."/>
            <person name="Zhou X."/>
            <person name="Zhu S.C."/>
            <person name="Zhu X."/>
            <person name="Smith H.O."/>
            <person name="Gibbs R.A."/>
            <person name="Myers E.W."/>
            <person name="Rubin G.M."/>
            <person name="Venter J.C."/>
        </authorList>
    </citation>
    <scope>NUCLEOTIDE SEQUENCE [LARGE SCALE GENOMIC DNA]</scope>
    <source>
        <strain evidence="3">Berkeley</strain>
    </source>
</reference>
<reference evidence="4" key="2">
    <citation type="journal article" date="2002" name="Genome Biol.">
        <title>Annotation of the Drosophila melanogaster euchromatic genome: a systematic review.</title>
        <authorList>
            <person name="Misra S."/>
            <person name="Crosby M.A."/>
            <person name="Mungall C.J."/>
            <person name="Matthews B.B."/>
            <person name="Campbell K.S."/>
            <person name="Hradecky P."/>
            <person name="Huang Y."/>
            <person name="Kaminker J.S."/>
            <person name="Millburn G.H."/>
            <person name="Prochnik S.E."/>
            <person name="Smith C.D."/>
            <person name="Tupy J.L."/>
            <person name="Whitfield E.J."/>
            <person name="Bayraktaroglu L."/>
            <person name="Berman B.P."/>
            <person name="Bettencourt B.R."/>
            <person name="Celniker S.E."/>
            <person name="de Grey A.D.N.J."/>
            <person name="Drysdale R.A."/>
            <person name="Harris N.L."/>
            <person name="Richter J."/>
            <person name="Russo S."/>
            <person name="Schroeder A.J."/>
            <person name="Shu S.Q."/>
            <person name="Stapleton M."/>
            <person name="Yamada C."/>
            <person name="Ashburner M."/>
            <person name="Gelbart W.M."/>
            <person name="Rubin G.M."/>
            <person name="Lewis S.E."/>
        </authorList>
    </citation>
    <scope>GENOME REANNOTATION</scope>
    <source>
        <strain>Berkeley</strain>
    </source>
</reference>
<reference key="3">
    <citation type="submission" date="2004-10" db="EMBL/GenBank/DDBJ databases">
        <authorList>
            <person name="Stapleton M."/>
            <person name="Carlson J.W."/>
            <person name="Chavez C."/>
            <person name="Frise E."/>
            <person name="George R.A."/>
            <person name="Pacleb J.M."/>
            <person name="Park S."/>
            <person name="Wan K.H."/>
            <person name="Yu C."/>
            <person name="Rubin G.M."/>
            <person name="Celniker S.E."/>
        </authorList>
    </citation>
    <scope>NUCLEOTIDE SEQUENCE [LARGE SCALE MRNA]</scope>
    <source>
        <strain>Berkeley</strain>
        <tissue>Larva</tissue>
        <tissue>Pupae</tissue>
    </source>
</reference>
<proteinExistence type="evidence at transcript level"/>
<accession>P83740</accession>
<accession>Q5U123</accession>